<dbReference type="EC" id="3.4.21.69"/>
<dbReference type="EMBL" id="D43754">
    <property type="protein sequence ID" value="BAA07811.1"/>
    <property type="molecule type" value="Genomic_DNA"/>
</dbReference>
<dbReference type="SMR" id="Q28506"/>
<dbReference type="STRING" id="9544.ENSMMUP00000051004"/>
<dbReference type="MEROPS" id="S01.218"/>
<dbReference type="GlyCosmos" id="Q28506">
    <property type="glycosylation" value="2 sites, No reported glycans"/>
</dbReference>
<dbReference type="PaxDb" id="9544-ENSMMUP00000031015"/>
<dbReference type="eggNOG" id="ENOG502QQ3W">
    <property type="taxonomic scope" value="Eukaryota"/>
</dbReference>
<dbReference type="HOGENOM" id="CLU_006842_19_5_1"/>
<dbReference type="InParanoid" id="Q28506"/>
<dbReference type="Proteomes" id="UP000006718">
    <property type="component" value="Unassembled WGS sequence"/>
</dbReference>
<dbReference type="GO" id="GO:0005783">
    <property type="term" value="C:endoplasmic reticulum"/>
    <property type="evidence" value="ECO:0000250"/>
    <property type="project" value="UniProtKB"/>
</dbReference>
<dbReference type="GO" id="GO:0005576">
    <property type="term" value="C:extracellular region"/>
    <property type="evidence" value="ECO:0007669"/>
    <property type="project" value="UniProtKB-SubCell"/>
</dbReference>
<dbReference type="GO" id="GO:0005794">
    <property type="term" value="C:Golgi apparatus"/>
    <property type="evidence" value="ECO:0000250"/>
    <property type="project" value="UniProtKB"/>
</dbReference>
<dbReference type="GO" id="GO:0004252">
    <property type="term" value="F:serine-type endopeptidase activity"/>
    <property type="evidence" value="ECO:0000250"/>
    <property type="project" value="UniProtKB"/>
</dbReference>
<dbReference type="GO" id="GO:0007596">
    <property type="term" value="P:blood coagulation"/>
    <property type="evidence" value="ECO:0007669"/>
    <property type="project" value="UniProtKB-KW"/>
</dbReference>
<dbReference type="GO" id="GO:0050819">
    <property type="term" value="P:negative regulation of coagulation"/>
    <property type="evidence" value="ECO:0000250"/>
    <property type="project" value="UniProtKB"/>
</dbReference>
<dbReference type="GO" id="GO:0050728">
    <property type="term" value="P:negative regulation of inflammatory response"/>
    <property type="evidence" value="ECO:0000250"/>
    <property type="project" value="UniProtKB"/>
</dbReference>
<dbReference type="GO" id="GO:1903142">
    <property type="term" value="P:positive regulation of establishment of endothelial barrier"/>
    <property type="evidence" value="ECO:0000250"/>
    <property type="project" value="UniProtKB"/>
</dbReference>
<dbReference type="GO" id="GO:0006508">
    <property type="term" value="P:proteolysis"/>
    <property type="evidence" value="ECO:0007669"/>
    <property type="project" value="UniProtKB-KW"/>
</dbReference>
<dbReference type="CDD" id="cd00190">
    <property type="entry name" value="Tryp_SPc"/>
    <property type="match status" value="1"/>
</dbReference>
<dbReference type="FunFam" id="2.40.10.10:FF:000011">
    <property type="entry name" value="Coagulation factor X"/>
    <property type="match status" value="1"/>
</dbReference>
<dbReference type="Gene3D" id="2.40.10.10">
    <property type="entry name" value="Trypsin-like serine proteases"/>
    <property type="match status" value="2"/>
</dbReference>
<dbReference type="InterPro" id="IPR050442">
    <property type="entry name" value="Peptidase_S1_coag_factors"/>
</dbReference>
<dbReference type="InterPro" id="IPR009003">
    <property type="entry name" value="Peptidase_S1_PA"/>
</dbReference>
<dbReference type="InterPro" id="IPR043504">
    <property type="entry name" value="Peptidase_S1_PA_chymotrypsin"/>
</dbReference>
<dbReference type="InterPro" id="IPR001314">
    <property type="entry name" value="Peptidase_S1A"/>
</dbReference>
<dbReference type="InterPro" id="IPR001254">
    <property type="entry name" value="Trypsin_dom"/>
</dbReference>
<dbReference type="InterPro" id="IPR033116">
    <property type="entry name" value="TRYPSIN_SER"/>
</dbReference>
<dbReference type="PANTHER" id="PTHR24278">
    <property type="entry name" value="COAGULATION FACTOR"/>
    <property type="match status" value="1"/>
</dbReference>
<dbReference type="PANTHER" id="PTHR24278:SF0">
    <property type="entry name" value="VITAMIN K-DEPENDENT PROTEIN C"/>
    <property type="match status" value="1"/>
</dbReference>
<dbReference type="Pfam" id="PF00089">
    <property type="entry name" value="Trypsin"/>
    <property type="match status" value="1"/>
</dbReference>
<dbReference type="PRINTS" id="PR00722">
    <property type="entry name" value="CHYMOTRYPSIN"/>
</dbReference>
<dbReference type="SMART" id="SM00020">
    <property type="entry name" value="Tryp_SPc"/>
    <property type="match status" value="1"/>
</dbReference>
<dbReference type="SUPFAM" id="SSF50494">
    <property type="entry name" value="Trypsin-like serine proteases"/>
    <property type="match status" value="1"/>
</dbReference>
<dbReference type="PROSITE" id="PS50240">
    <property type="entry name" value="TRYPSIN_DOM"/>
    <property type="match status" value="1"/>
</dbReference>
<dbReference type="PROSITE" id="PS00135">
    <property type="entry name" value="TRYPSIN_SER"/>
    <property type="match status" value="1"/>
</dbReference>
<keyword id="KW-0094">Blood coagulation</keyword>
<keyword id="KW-1015">Disulfide bond</keyword>
<keyword id="KW-0256">Endoplasmic reticulum</keyword>
<keyword id="KW-0325">Glycoprotein</keyword>
<keyword id="KW-0333">Golgi apparatus</keyword>
<keyword id="KW-0356">Hemostasis</keyword>
<keyword id="KW-0378">Hydrolase</keyword>
<keyword id="KW-0645">Protease</keyword>
<keyword id="KW-1185">Reference proteome</keyword>
<keyword id="KW-0964">Secreted</keyword>
<keyword id="KW-0720">Serine protease</keyword>
<name>PROC_MACMU</name>
<gene>
    <name type="primary">PROC</name>
</gene>
<reference key="1">
    <citation type="journal article" date="1994" name="Br. J. Haematol.">
        <title>A comparative study of partial primary structures of the catalytic region of mammalian protein C.</title>
        <authorList>
            <person name="Murakawa M."/>
            <person name="Okamura T."/>
            <person name="Kamura T."/>
            <person name="Kuroiwa M."/>
            <person name="Harada M."/>
            <person name="Niho Y."/>
        </authorList>
    </citation>
    <scope>NUCLEOTIDE SEQUENCE [GENOMIC DNA]</scope>
</reference>
<protein>
    <recommendedName>
        <fullName>Vitamin K-dependent protein C</fullName>
        <ecNumber>3.4.21.69</ecNumber>
    </recommendedName>
    <alternativeName>
        <fullName>Anticoagulant protein C</fullName>
    </alternativeName>
    <alternativeName>
        <fullName>Autoprothrombin IIA</fullName>
    </alternativeName>
    <alternativeName>
        <fullName>Blood coagulation factor XIV</fullName>
    </alternativeName>
</protein>
<evidence type="ECO:0000250" key="1">
    <source>
        <dbReference type="UniProtKB" id="P04070"/>
    </source>
</evidence>
<evidence type="ECO:0000255" key="2"/>
<evidence type="ECO:0000255" key="3">
    <source>
        <dbReference type="PROSITE-ProRule" id="PRU00274"/>
    </source>
</evidence>
<organism>
    <name type="scientific">Macaca mulatta</name>
    <name type="common">Rhesus macaque</name>
    <dbReference type="NCBI Taxonomy" id="9544"/>
    <lineage>
        <taxon>Eukaryota</taxon>
        <taxon>Metazoa</taxon>
        <taxon>Chordata</taxon>
        <taxon>Craniata</taxon>
        <taxon>Vertebrata</taxon>
        <taxon>Euteleostomi</taxon>
        <taxon>Mammalia</taxon>
        <taxon>Eutheria</taxon>
        <taxon>Euarchontoglires</taxon>
        <taxon>Primates</taxon>
        <taxon>Haplorrhini</taxon>
        <taxon>Catarrhini</taxon>
        <taxon>Cercopithecidae</taxon>
        <taxon>Cercopithecinae</taxon>
        <taxon>Macaca</taxon>
    </lineage>
</organism>
<accession>Q28506</accession>
<proteinExistence type="evidence at transcript level"/>
<sequence>EKWELDLDIEEVFIHPNYTKSTTDNDIALLRLAQPATLSQTIVPICLPDSGLAERELTQAGQETLVTGWGYHSSREKEAKRNRTFILNFIKIPVVPRNECSEVMSNMVSENMLCAGILGDRQDACEGDSGGPMVASFHGTWFLVGLVSWGEGCGLLHNYGV</sequence>
<comment type="function">
    <text evidence="1">Protein C is a vitamin K-dependent serine protease that regulates blood coagulation by inactivating factors Va and VIIIa in the presence of calcium ions and phospholipids. Exerts a protective effect on the endothelial cell barrier function.</text>
</comment>
<comment type="catalytic activity">
    <reaction>
        <text>Degradation of blood coagulation factors Va and VIIIa.</text>
        <dbReference type="EC" id="3.4.21.69"/>
    </reaction>
</comment>
<comment type="subcellular location">
    <subcellularLocation>
        <location evidence="1">Secreted</location>
    </subcellularLocation>
    <subcellularLocation>
        <location evidence="1">Golgi apparatus</location>
    </subcellularLocation>
    <subcellularLocation>
        <location evidence="1">Endoplasmic reticulum</location>
    </subcellularLocation>
</comment>
<comment type="tissue specificity">
    <text>Plasma; synthesized in the liver.</text>
</comment>
<comment type="similarity">
    <text evidence="3">Belongs to the peptidase S1 family.</text>
</comment>
<feature type="chain" id="PRO_0000088711" description="Vitamin K-dependent protein C">
    <location>
        <begin position="1" status="less than"/>
        <end position="161" status="greater than"/>
    </location>
</feature>
<feature type="domain" description="Peptidase S1" evidence="3">
    <location>
        <begin position="1" status="less than"/>
        <end position="161" status="greater than"/>
    </location>
</feature>
<feature type="active site" description="Charge relay system">
    <location>
        <position position="26"/>
    </location>
</feature>
<feature type="active site" description="Charge relay system">
    <location>
        <position position="129"/>
    </location>
</feature>
<feature type="glycosylation site" description="N-linked (GlcNAc...) asparagine" evidence="2">
    <location>
        <position position="17"/>
    </location>
</feature>
<feature type="glycosylation site" description="N-linked (GlcNAc...) asparagine" evidence="2">
    <location>
        <position position="82"/>
    </location>
</feature>
<feature type="disulfide bond" evidence="3">
    <location>
        <begin position="100"/>
        <end position="114"/>
    </location>
</feature>
<feature type="disulfide bond" evidence="3">
    <location>
        <begin position="125"/>
        <end position="153"/>
    </location>
</feature>
<feature type="non-terminal residue">
    <location>
        <position position="1"/>
    </location>
</feature>
<feature type="non-terminal residue">
    <location>
        <position position="161"/>
    </location>
</feature>